<evidence type="ECO:0000255" key="1">
    <source>
        <dbReference type="HAMAP-Rule" id="MF_00127"/>
    </source>
</evidence>
<keyword id="KW-0030">Aminoacyl-tRNA synthetase</keyword>
<keyword id="KW-0067">ATP-binding</keyword>
<keyword id="KW-0963">Cytoplasm</keyword>
<keyword id="KW-0436">Ligase</keyword>
<keyword id="KW-0547">Nucleotide-binding</keyword>
<keyword id="KW-0648">Protein biosynthesis</keyword>
<keyword id="KW-1185">Reference proteome</keyword>
<gene>
    <name evidence="1" type="primary">hisS</name>
    <name type="ordered locus">SGO_2062</name>
</gene>
<feature type="chain" id="PRO_1000076293" description="Histidine--tRNA ligase">
    <location>
        <begin position="1"/>
        <end position="426"/>
    </location>
</feature>
<reference key="1">
    <citation type="journal article" date="2007" name="J. Bacteriol.">
        <title>Genome-wide transcriptional changes in Streptococcus gordonii in response to competence signaling peptide.</title>
        <authorList>
            <person name="Vickerman M.M."/>
            <person name="Iobst S."/>
            <person name="Jesionowski A.M."/>
            <person name="Gill S.R."/>
        </authorList>
    </citation>
    <scope>NUCLEOTIDE SEQUENCE [LARGE SCALE GENOMIC DNA]</scope>
    <source>
        <strain>Challis / ATCC 35105 / BCRC 15272 / CH1 / DL1 / V288</strain>
    </source>
</reference>
<protein>
    <recommendedName>
        <fullName evidence="1">Histidine--tRNA ligase</fullName>
        <ecNumber evidence="1">6.1.1.21</ecNumber>
    </recommendedName>
    <alternativeName>
        <fullName evidence="1">Histidyl-tRNA synthetase</fullName>
        <shortName evidence="1">HisRS</shortName>
    </alternativeName>
</protein>
<comment type="catalytic activity">
    <reaction evidence="1">
        <text>tRNA(His) + L-histidine + ATP = L-histidyl-tRNA(His) + AMP + diphosphate + H(+)</text>
        <dbReference type="Rhea" id="RHEA:17313"/>
        <dbReference type="Rhea" id="RHEA-COMP:9665"/>
        <dbReference type="Rhea" id="RHEA-COMP:9689"/>
        <dbReference type="ChEBI" id="CHEBI:15378"/>
        <dbReference type="ChEBI" id="CHEBI:30616"/>
        <dbReference type="ChEBI" id="CHEBI:33019"/>
        <dbReference type="ChEBI" id="CHEBI:57595"/>
        <dbReference type="ChEBI" id="CHEBI:78442"/>
        <dbReference type="ChEBI" id="CHEBI:78527"/>
        <dbReference type="ChEBI" id="CHEBI:456215"/>
        <dbReference type="EC" id="6.1.1.21"/>
    </reaction>
</comment>
<comment type="subunit">
    <text evidence="1">Homodimer.</text>
</comment>
<comment type="subcellular location">
    <subcellularLocation>
        <location evidence="1">Cytoplasm</location>
    </subcellularLocation>
</comment>
<comment type="similarity">
    <text evidence="1">Belongs to the class-II aminoacyl-tRNA synthetase family.</text>
</comment>
<dbReference type="EC" id="6.1.1.21" evidence="1"/>
<dbReference type="EMBL" id="CP000725">
    <property type="protein sequence ID" value="ABV09433.1"/>
    <property type="molecule type" value="Genomic_DNA"/>
</dbReference>
<dbReference type="RefSeq" id="WP_012131030.1">
    <property type="nucleotide sequence ID" value="NC_009785.1"/>
</dbReference>
<dbReference type="SMR" id="A8AZV0"/>
<dbReference type="STRING" id="467705.SGO_2062"/>
<dbReference type="KEGG" id="sgo:SGO_2062"/>
<dbReference type="eggNOG" id="COG0124">
    <property type="taxonomic scope" value="Bacteria"/>
</dbReference>
<dbReference type="HOGENOM" id="CLU_025113_1_1_9"/>
<dbReference type="Proteomes" id="UP000001131">
    <property type="component" value="Chromosome"/>
</dbReference>
<dbReference type="GO" id="GO:0005737">
    <property type="term" value="C:cytoplasm"/>
    <property type="evidence" value="ECO:0007669"/>
    <property type="project" value="UniProtKB-SubCell"/>
</dbReference>
<dbReference type="GO" id="GO:0005524">
    <property type="term" value="F:ATP binding"/>
    <property type="evidence" value="ECO:0007669"/>
    <property type="project" value="UniProtKB-UniRule"/>
</dbReference>
<dbReference type="GO" id="GO:0140096">
    <property type="term" value="F:catalytic activity, acting on a protein"/>
    <property type="evidence" value="ECO:0007669"/>
    <property type="project" value="UniProtKB-ARBA"/>
</dbReference>
<dbReference type="GO" id="GO:0004821">
    <property type="term" value="F:histidine-tRNA ligase activity"/>
    <property type="evidence" value="ECO:0007669"/>
    <property type="project" value="UniProtKB-UniRule"/>
</dbReference>
<dbReference type="GO" id="GO:0016740">
    <property type="term" value="F:transferase activity"/>
    <property type="evidence" value="ECO:0007669"/>
    <property type="project" value="UniProtKB-ARBA"/>
</dbReference>
<dbReference type="GO" id="GO:0006427">
    <property type="term" value="P:histidyl-tRNA aminoacylation"/>
    <property type="evidence" value="ECO:0007669"/>
    <property type="project" value="UniProtKB-UniRule"/>
</dbReference>
<dbReference type="CDD" id="cd00773">
    <property type="entry name" value="HisRS-like_core"/>
    <property type="match status" value="1"/>
</dbReference>
<dbReference type="CDD" id="cd00859">
    <property type="entry name" value="HisRS_anticodon"/>
    <property type="match status" value="1"/>
</dbReference>
<dbReference type="FunFam" id="3.30.930.10:FF:000005">
    <property type="entry name" value="Histidine--tRNA ligase"/>
    <property type="match status" value="1"/>
</dbReference>
<dbReference type="Gene3D" id="3.40.50.800">
    <property type="entry name" value="Anticodon-binding domain"/>
    <property type="match status" value="1"/>
</dbReference>
<dbReference type="Gene3D" id="3.30.930.10">
    <property type="entry name" value="Bira Bifunctional Protein, Domain 2"/>
    <property type="match status" value="1"/>
</dbReference>
<dbReference type="HAMAP" id="MF_00127">
    <property type="entry name" value="His_tRNA_synth"/>
    <property type="match status" value="1"/>
</dbReference>
<dbReference type="InterPro" id="IPR006195">
    <property type="entry name" value="aa-tRNA-synth_II"/>
</dbReference>
<dbReference type="InterPro" id="IPR045864">
    <property type="entry name" value="aa-tRNA-synth_II/BPL/LPL"/>
</dbReference>
<dbReference type="InterPro" id="IPR004154">
    <property type="entry name" value="Anticodon-bd"/>
</dbReference>
<dbReference type="InterPro" id="IPR036621">
    <property type="entry name" value="Anticodon-bd_dom_sf"/>
</dbReference>
<dbReference type="InterPro" id="IPR015807">
    <property type="entry name" value="His-tRNA-ligase"/>
</dbReference>
<dbReference type="InterPro" id="IPR041715">
    <property type="entry name" value="HisRS-like_core"/>
</dbReference>
<dbReference type="InterPro" id="IPR004516">
    <property type="entry name" value="HisRS/HisZ"/>
</dbReference>
<dbReference type="InterPro" id="IPR033656">
    <property type="entry name" value="HisRS_anticodon"/>
</dbReference>
<dbReference type="NCBIfam" id="TIGR00442">
    <property type="entry name" value="hisS"/>
    <property type="match status" value="1"/>
</dbReference>
<dbReference type="PANTHER" id="PTHR43707:SF1">
    <property type="entry name" value="HISTIDINE--TRNA LIGASE, MITOCHONDRIAL-RELATED"/>
    <property type="match status" value="1"/>
</dbReference>
<dbReference type="PANTHER" id="PTHR43707">
    <property type="entry name" value="HISTIDYL-TRNA SYNTHETASE"/>
    <property type="match status" value="1"/>
</dbReference>
<dbReference type="Pfam" id="PF03129">
    <property type="entry name" value="HGTP_anticodon"/>
    <property type="match status" value="1"/>
</dbReference>
<dbReference type="Pfam" id="PF13393">
    <property type="entry name" value="tRNA-synt_His"/>
    <property type="match status" value="1"/>
</dbReference>
<dbReference type="PIRSF" id="PIRSF001549">
    <property type="entry name" value="His-tRNA_synth"/>
    <property type="match status" value="1"/>
</dbReference>
<dbReference type="SUPFAM" id="SSF52954">
    <property type="entry name" value="Class II aaRS ABD-related"/>
    <property type="match status" value="1"/>
</dbReference>
<dbReference type="SUPFAM" id="SSF55681">
    <property type="entry name" value="Class II aaRS and biotin synthetases"/>
    <property type="match status" value="1"/>
</dbReference>
<dbReference type="PROSITE" id="PS50862">
    <property type="entry name" value="AA_TRNA_LIGASE_II"/>
    <property type="match status" value="1"/>
</dbReference>
<accession>A8AZV0</accession>
<proteinExistence type="inferred from homology"/>
<organism>
    <name type="scientific">Streptococcus gordonii (strain Challis / ATCC 35105 / BCRC 15272 / CH1 / DL1 / V288)</name>
    <dbReference type="NCBI Taxonomy" id="467705"/>
    <lineage>
        <taxon>Bacteria</taxon>
        <taxon>Bacillati</taxon>
        <taxon>Bacillota</taxon>
        <taxon>Bacilli</taxon>
        <taxon>Lactobacillales</taxon>
        <taxon>Streptococcaceae</taxon>
        <taxon>Streptococcus</taxon>
    </lineage>
</organism>
<name>SYH_STRGC</name>
<sequence length="426" mass="47672">MKLQKPKGTQDILPQESAKWQYVEEFARETFRKYNYAEIRTPIFEHYEVISRSVGDTTDIVTKEMYDFYDKGDRHITLRPEGTAPVVRSYVENKLFAPEVQKPVKLYYMGSMFRYERPQAGRLREFHQIGAECFGSSNPATDVEMIAMAAQFFKEIGITNVSLELNTLGNPESRAAYRQALIDYLTPLKASLSADSQRRLEENPLRVLDSKEPEDKVAVEGAPSILDYLDEESSAYFAAVRSMLETLQIPYVINTNMVRGLDYYNHTIFEFTTEVAGSQLTICAGGRYDGLVAYFGGPETPGVGFGMGLERLLLVLDKQGVELPIEMGLDAYIAVLGAGANGKALELVQSLRAQGFAAERDYLDRKIKAQFKSADIFQAKTIITLGESELESGELTVKNNVTRQEVTVAFEAIKTDFQGVLAQIGL</sequence>